<proteinExistence type="inferred from homology"/>
<comment type="function">
    <text evidence="1">Multifunctional regulator of fatty acid metabolism.</text>
</comment>
<comment type="subunit">
    <text evidence="1">Homodimer.</text>
</comment>
<comment type="subcellular location">
    <subcellularLocation>
        <location evidence="1">Cytoplasm</location>
    </subcellularLocation>
</comment>
<protein>
    <recommendedName>
        <fullName evidence="1">Fatty acid metabolism regulator protein</fullName>
    </recommendedName>
</protein>
<keyword id="KW-0010">Activator</keyword>
<keyword id="KW-0963">Cytoplasm</keyword>
<keyword id="KW-0238">DNA-binding</keyword>
<keyword id="KW-0276">Fatty acid metabolism</keyword>
<keyword id="KW-0443">Lipid metabolism</keyword>
<keyword id="KW-0678">Repressor</keyword>
<keyword id="KW-0804">Transcription</keyword>
<keyword id="KW-0805">Transcription regulation</keyword>
<sequence length="239" mass="26969">MVIKAQSPAGFAEEYIIESIWNNRFPPGTILPAERELSELIGVTRTTLREVLQRLARDGWLTIQHGKPTKVNNFWETSGLNILETLARLDHESVPQLIDNLLSVRTNISTIFIRTAFRQHPDKAQEVLATANEVADHADAFAELDYNIFRGLAFASGNPIYGLILNGMKGLYTRIGRHYFANPEARSLALGFYHKLSALCSEGAHDQVYETVRRYGHESGEIWHRMQKNLPGDLAIQGR</sequence>
<name>FADR_ECOHS</name>
<reference key="1">
    <citation type="journal article" date="2008" name="J. Bacteriol.">
        <title>The pangenome structure of Escherichia coli: comparative genomic analysis of E. coli commensal and pathogenic isolates.</title>
        <authorList>
            <person name="Rasko D.A."/>
            <person name="Rosovitz M.J."/>
            <person name="Myers G.S.A."/>
            <person name="Mongodin E.F."/>
            <person name="Fricke W.F."/>
            <person name="Gajer P."/>
            <person name="Crabtree J."/>
            <person name="Sebaihia M."/>
            <person name="Thomson N.R."/>
            <person name="Chaudhuri R."/>
            <person name="Henderson I.R."/>
            <person name="Sperandio V."/>
            <person name="Ravel J."/>
        </authorList>
    </citation>
    <scope>NUCLEOTIDE SEQUENCE [LARGE SCALE GENOMIC DNA]</scope>
    <source>
        <strain>HS</strain>
    </source>
</reference>
<evidence type="ECO:0000255" key="1">
    <source>
        <dbReference type="HAMAP-Rule" id="MF_00696"/>
    </source>
</evidence>
<accession>A7ZZC1</accession>
<feature type="chain" id="PRO_1000062056" description="Fatty acid metabolism regulator protein">
    <location>
        <begin position="1"/>
        <end position="239"/>
    </location>
</feature>
<feature type="domain" description="HTH gntR-type" evidence="1">
    <location>
        <begin position="6"/>
        <end position="74"/>
    </location>
</feature>
<feature type="DNA-binding region" description="H-T-H motif" evidence="1">
    <location>
        <begin position="34"/>
        <end position="53"/>
    </location>
</feature>
<gene>
    <name evidence="1" type="primary">fadR</name>
    <name type="ordered locus">EcHS_A1290</name>
</gene>
<dbReference type="EMBL" id="CP000802">
    <property type="protein sequence ID" value="ABV05625.1"/>
    <property type="molecule type" value="Genomic_DNA"/>
</dbReference>
<dbReference type="RefSeq" id="WP_000234823.1">
    <property type="nucleotide sequence ID" value="NC_009800.1"/>
</dbReference>
<dbReference type="SMR" id="A7ZZC1"/>
<dbReference type="GeneID" id="93776245"/>
<dbReference type="KEGG" id="ecx:EcHS_A1290"/>
<dbReference type="HOGENOM" id="CLU_017584_9_4_6"/>
<dbReference type="GO" id="GO:0005737">
    <property type="term" value="C:cytoplasm"/>
    <property type="evidence" value="ECO:0007669"/>
    <property type="project" value="UniProtKB-SubCell"/>
</dbReference>
<dbReference type="GO" id="GO:0003677">
    <property type="term" value="F:DNA binding"/>
    <property type="evidence" value="ECO:0007669"/>
    <property type="project" value="UniProtKB-KW"/>
</dbReference>
<dbReference type="GO" id="GO:0003700">
    <property type="term" value="F:DNA-binding transcription factor activity"/>
    <property type="evidence" value="ECO:0007669"/>
    <property type="project" value="UniProtKB-UniRule"/>
</dbReference>
<dbReference type="GO" id="GO:0000062">
    <property type="term" value="F:fatty-acyl-CoA binding"/>
    <property type="evidence" value="ECO:0007669"/>
    <property type="project" value="InterPro"/>
</dbReference>
<dbReference type="GO" id="GO:0006631">
    <property type="term" value="P:fatty acid metabolic process"/>
    <property type="evidence" value="ECO:0007669"/>
    <property type="project" value="UniProtKB-KW"/>
</dbReference>
<dbReference type="GO" id="GO:0019217">
    <property type="term" value="P:regulation of fatty acid metabolic process"/>
    <property type="evidence" value="ECO:0007669"/>
    <property type="project" value="UniProtKB-UniRule"/>
</dbReference>
<dbReference type="CDD" id="cd07377">
    <property type="entry name" value="WHTH_GntR"/>
    <property type="match status" value="1"/>
</dbReference>
<dbReference type="FunFam" id="1.10.10.10:FF:000036">
    <property type="entry name" value="Fatty acid metabolism regulator protein"/>
    <property type="match status" value="1"/>
</dbReference>
<dbReference type="FunFam" id="1.20.120.530:FF:000003">
    <property type="entry name" value="Fatty acid metabolism regulator protein"/>
    <property type="match status" value="1"/>
</dbReference>
<dbReference type="Gene3D" id="1.20.120.530">
    <property type="entry name" value="GntR ligand-binding domain-like"/>
    <property type="match status" value="1"/>
</dbReference>
<dbReference type="Gene3D" id="1.10.10.10">
    <property type="entry name" value="Winged helix-like DNA-binding domain superfamily/Winged helix DNA-binding domain"/>
    <property type="match status" value="1"/>
</dbReference>
<dbReference type="HAMAP" id="MF_00696">
    <property type="entry name" value="HTH_FadR"/>
    <property type="match status" value="1"/>
</dbReference>
<dbReference type="InterPro" id="IPR014178">
    <property type="entry name" value="FA-response_TF_FadR"/>
</dbReference>
<dbReference type="InterPro" id="IPR028374">
    <property type="entry name" value="FadR_C"/>
</dbReference>
<dbReference type="InterPro" id="IPR008920">
    <property type="entry name" value="TF_FadR/GntR_C"/>
</dbReference>
<dbReference type="InterPro" id="IPR000524">
    <property type="entry name" value="Tscrpt_reg_HTH_GntR"/>
</dbReference>
<dbReference type="InterPro" id="IPR036388">
    <property type="entry name" value="WH-like_DNA-bd_sf"/>
</dbReference>
<dbReference type="InterPro" id="IPR036390">
    <property type="entry name" value="WH_DNA-bd_sf"/>
</dbReference>
<dbReference type="NCBIfam" id="TIGR02812">
    <property type="entry name" value="fadR_gamma"/>
    <property type="match status" value="1"/>
</dbReference>
<dbReference type="NCBIfam" id="NF003444">
    <property type="entry name" value="PRK04984.1"/>
    <property type="match status" value="1"/>
</dbReference>
<dbReference type="PANTHER" id="PTHR43537:SF52">
    <property type="entry name" value="FATTY ACID METABOLISM REGULATOR PROTEIN"/>
    <property type="match status" value="1"/>
</dbReference>
<dbReference type="PANTHER" id="PTHR43537">
    <property type="entry name" value="TRANSCRIPTIONAL REGULATOR, GNTR FAMILY"/>
    <property type="match status" value="1"/>
</dbReference>
<dbReference type="Pfam" id="PF07840">
    <property type="entry name" value="FadR_C"/>
    <property type="match status" value="1"/>
</dbReference>
<dbReference type="Pfam" id="PF00392">
    <property type="entry name" value="GntR"/>
    <property type="match status" value="1"/>
</dbReference>
<dbReference type="PRINTS" id="PR00035">
    <property type="entry name" value="HTHGNTR"/>
</dbReference>
<dbReference type="SMART" id="SM00345">
    <property type="entry name" value="HTH_GNTR"/>
    <property type="match status" value="1"/>
</dbReference>
<dbReference type="SUPFAM" id="SSF48008">
    <property type="entry name" value="GntR ligand-binding domain-like"/>
    <property type="match status" value="1"/>
</dbReference>
<dbReference type="SUPFAM" id="SSF46785">
    <property type="entry name" value="Winged helix' DNA-binding domain"/>
    <property type="match status" value="1"/>
</dbReference>
<dbReference type="PROSITE" id="PS50949">
    <property type="entry name" value="HTH_GNTR"/>
    <property type="match status" value="1"/>
</dbReference>
<organism>
    <name type="scientific">Escherichia coli O9:H4 (strain HS)</name>
    <dbReference type="NCBI Taxonomy" id="331112"/>
    <lineage>
        <taxon>Bacteria</taxon>
        <taxon>Pseudomonadati</taxon>
        <taxon>Pseudomonadota</taxon>
        <taxon>Gammaproteobacteria</taxon>
        <taxon>Enterobacterales</taxon>
        <taxon>Enterobacteriaceae</taxon>
        <taxon>Escherichia</taxon>
    </lineage>
</organism>